<dbReference type="EC" id="3.4.24.-"/>
<dbReference type="EMBL" id="AE017333">
    <property type="protein sequence ID" value="AAU40772.1"/>
    <property type="molecule type" value="Genomic_DNA"/>
</dbReference>
<dbReference type="EMBL" id="CP000002">
    <property type="protein sequence ID" value="AAU23412.1"/>
    <property type="molecule type" value="Genomic_DNA"/>
</dbReference>
<dbReference type="SMR" id="Q65JJ2"/>
<dbReference type="STRING" id="279010.BL01236"/>
<dbReference type="MEROPS" id="M50.011"/>
<dbReference type="KEGG" id="bld:BLi01877"/>
<dbReference type="KEGG" id="bli:BL01236"/>
<dbReference type="PATRIC" id="fig|279010.13.peg.1876"/>
<dbReference type="eggNOG" id="COG0750">
    <property type="taxonomic scope" value="Bacteria"/>
</dbReference>
<dbReference type="HOGENOM" id="CLU_025778_1_0_9"/>
<dbReference type="Proteomes" id="UP000000606">
    <property type="component" value="Chromosome"/>
</dbReference>
<dbReference type="GO" id="GO:0005886">
    <property type="term" value="C:plasma membrane"/>
    <property type="evidence" value="ECO:0007669"/>
    <property type="project" value="UniProtKB-SubCell"/>
</dbReference>
<dbReference type="GO" id="GO:0046872">
    <property type="term" value="F:metal ion binding"/>
    <property type="evidence" value="ECO:0007669"/>
    <property type="project" value="UniProtKB-KW"/>
</dbReference>
<dbReference type="GO" id="GO:0004222">
    <property type="term" value="F:metalloendopeptidase activity"/>
    <property type="evidence" value="ECO:0007669"/>
    <property type="project" value="InterPro"/>
</dbReference>
<dbReference type="GO" id="GO:0006508">
    <property type="term" value="P:proteolysis"/>
    <property type="evidence" value="ECO:0007669"/>
    <property type="project" value="UniProtKB-KW"/>
</dbReference>
<dbReference type="CDD" id="cd23081">
    <property type="entry name" value="cpPDZ_EcRseP-like"/>
    <property type="match status" value="1"/>
</dbReference>
<dbReference type="CDD" id="cd06163">
    <property type="entry name" value="S2P-M50_PDZ_RseP-like"/>
    <property type="match status" value="1"/>
</dbReference>
<dbReference type="Gene3D" id="2.30.42.10">
    <property type="match status" value="1"/>
</dbReference>
<dbReference type="InterPro" id="IPR001478">
    <property type="entry name" value="PDZ"/>
</dbReference>
<dbReference type="InterPro" id="IPR041489">
    <property type="entry name" value="PDZ_6"/>
</dbReference>
<dbReference type="InterPro" id="IPR036034">
    <property type="entry name" value="PDZ_sf"/>
</dbReference>
<dbReference type="InterPro" id="IPR004387">
    <property type="entry name" value="Pept_M50_Zn"/>
</dbReference>
<dbReference type="InterPro" id="IPR008915">
    <property type="entry name" value="Peptidase_M50"/>
</dbReference>
<dbReference type="NCBIfam" id="TIGR00054">
    <property type="entry name" value="RIP metalloprotease RseP"/>
    <property type="match status" value="1"/>
</dbReference>
<dbReference type="PANTHER" id="PTHR42837:SF2">
    <property type="entry name" value="MEMBRANE METALLOPROTEASE ARASP2, CHLOROPLASTIC-RELATED"/>
    <property type="match status" value="1"/>
</dbReference>
<dbReference type="PANTHER" id="PTHR42837">
    <property type="entry name" value="REGULATOR OF SIGMA-E PROTEASE RSEP"/>
    <property type="match status" value="1"/>
</dbReference>
<dbReference type="Pfam" id="PF17820">
    <property type="entry name" value="PDZ_6"/>
    <property type="match status" value="1"/>
</dbReference>
<dbReference type="Pfam" id="PF02163">
    <property type="entry name" value="Peptidase_M50"/>
    <property type="match status" value="1"/>
</dbReference>
<dbReference type="SMART" id="SM00228">
    <property type="entry name" value="PDZ"/>
    <property type="match status" value="1"/>
</dbReference>
<dbReference type="SUPFAM" id="SSF50156">
    <property type="entry name" value="PDZ domain-like"/>
    <property type="match status" value="1"/>
</dbReference>
<dbReference type="PROSITE" id="PS00142">
    <property type="entry name" value="ZINC_PROTEASE"/>
    <property type="match status" value="1"/>
</dbReference>
<gene>
    <name type="primary">rasP</name>
    <name type="ordered locus">BLi01877</name>
    <name type="ordered locus">BL01236</name>
</gene>
<accession>Q65JJ2</accession>
<accession>Q62UZ7</accession>
<organism>
    <name type="scientific">Bacillus licheniformis (strain ATCC 14580 / DSM 13 / JCM 2505 / CCUG 7422 / NBRC 12200 / NCIMB 9375 / NCTC 10341 / NRRL NRS-1264 / Gibson 46)</name>
    <dbReference type="NCBI Taxonomy" id="279010"/>
    <lineage>
        <taxon>Bacteria</taxon>
        <taxon>Bacillati</taxon>
        <taxon>Bacillota</taxon>
        <taxon>Bacilli</taxon>
        <taxon>Bacillales</taxon>
        <taxon>Bacillaceae</taxon>
        <taxon>Bacillus</taxon>
    </lineage>
</organism>
<feature type="chain" id="PRO_0000248826" description="Zinc metalloprotease RasP">
    <location>
        <begin position="1"/>
        <end position="419"/>
    </location>
</feature>
<feature type="transmembrane region" description="Helical" evidence="2">
    <location>
        <begin position="4"/>
        <end position="24"/>
    </location>
</feature>
<feature type="transmembrane region" description="Helical" evidence="2">
    <location>
        <begin position="173"/>
        <end position="193"/>
    </location>
</feature>
<feature type="transmembrane region" description="Helical" evidence="2">
    <location>
        <begin position="349"/>
        <end position="369"/>
    </location>
</feature>
<feature type="transmembrane region" description="Helical" evidence="2">
    <location>
        <begin position="391"/>
        <end position="411"/>
    </location>
</feature>
<feature type="domain" description="PDZ">
    <location>
        <begin position="184"/>
        <end position="269"/>
    </location>
</feature>
<feature type="active site" evidence="3">
    <location>
        <position position="19"/>
    </location>
</feature>
<feature type="binding site" evidence="3">
    <location>
        <position position="18"/>
    </location>
    <ligand>
        <name>Zn(2+)</name>
        <dbReference type="ChEBI" id="CHEBI:29105"/>
        <note>catalytic</note>
    </ligand>
</feature>
<feature type="binding site" evidence="3">
    <location>
        <position position="22"/>
    </location>
    <ligand>
        <name>Zn(2+)</name>
        <dbReference type="ChEBI" id="CHEBI:29105"/>
        <note>catalytic</note>
    </ligand>
</feature>
<proteinExistence type="inferred from homology"/>
<evidence type="ECO:0000250" key="1"/>
<evidence type="ECO:0000255" key="2"/>
<evidence type="ECO:0000255" key="3">
    <source>
        <dbReference type="PROSITE-ProRule" id="PRU10095"/>
    </source>
</evidence>
<evidence type="ECO:0000305" key="4"/>
<reference key="1">
    <citation type="journal article" date="2004" name="J. Mol. Microbiol. Biotechnol.">
        <title>The complete genome sequence of Bacillus licheniformis DSM13, an organism with great industrial potential.</title>
        <authorList>
            <person name="Veith B."/>
            <person name="Herzberg C."/>
            <person name="Steckel S."/>
            <person name="Feesche J."/>
            <person name="Maurer K.H."/>
            <person name="Ehrenreich P."/>
            <person name="Baeumer S."/>
            <person name="Henne A."/>
            <person name="Liesegang H."/>
            <person name="Merkl R."/>
            <person name="Ehrenreich A."/>
            <person name="Gottschalk G."/>
        </authorList>
    </citation>
    <scope>NUCLEOTIDE SEQUENCE [LARGE SCALE GENOMIC DNA]</scope>
    <source>
        <strain>ATCC 14580 / DSM 13 / JCM 2505 / CCUG 7422 / NBRC 12200 / NCIMB 9375 / NCTC 10341 / NRRL NRS-1264 / Gibson 46</strain>
    </source>
</reference>
<reference key="2">
    <citation type="journal article" date="2004" name="Genome Biol.">
        <title>Complete genome sequence of the industrial bacterium Bacillus licheniformis and comparisons with closely related Bacillus species.</title>
        <authorList>
            <person name="Rey M.W."/>
            <person name="Ramaiya P."/>
            <person name="Nelson B.A."/>
            <person name="Brody-Karpin S.D."/>
            <person name="Zaretsky E.J."/>
            <person name="Tang M."/>
            <person name="Lopez de Leon A."/>
            <person name="Xiang H."/>
            <person name="Gusti V."/>
            <person name="Clausen I.G."/>
            <person name="Olsen P.B."/>
            <person name="Rasmussen M.D."/>
            <person name="Andersen J.T."/>
            <person name="Joergensen P.L."/>
            <person name="Larsen T.S."/>
            <person name="Sorokin A."/>
            <person name="Bolotin A."/>
            <person name="Lapidus A."/>
            <person name="Galleron N."/>
            <person name="Ehrlich S.D."/>
            <person name="Berka R.M."/>
        </authorList>
    </citation>
    <scope>NUCLEOTIDE SEQUENCE [LARGE SCALE GENOMIC DNA]</scope>
    <source>
        <strain>ATCC 14580 / DSM 13 / JCM 2505 / CCUG 7422 / NBRC 12200 / NCIMB 9375 / NCTC 10341 / NRRL NRS-1264 / Gibson 46</strain>
    </source>
</reference>
<keyword id="KW-1003">Cell membrane</keyword>
<keyword id="KW-0378">Hydrolase</keyword>
<keyword id="KW-0472">Membrane</keyword>
<keyword id="KW-0479">Metal-binding</keyword>
<keyword id="KW-0482">Metalloprotease</keyword>
<keyword id="KW-0645">Protease</keyword>
<keyword id="KW-1185">Reference proteome</keyword>
<keyword id="KW-0812">Transmembrane</keyword>
<keyword id="KW-1133">Transmembrane helix</keyword>
<keyword id="KW-0862">Zinc</keyword>
<name>RASP_BACLD</name>
<protein>
    <recommendedName>
        <fullName>Zinc metalloprotease RasP</fullName>
        <ecNumber>3.4.24.-</ecNumber>
    </recommendedName>
    <alternativeName>
        <fullName>Regulating alternative sigma factor protease</fullName>
    </alternativeName>
    <alternativeName>
        <fullName>Regulating anti-sigma-W factor activity protease</fullName>
    </alternativeName>
</protein>
<sequence>MNTVIAFILIFGTLVFFHELGHLILAQRAGILCREFAIGFGPKIFSFKKNETVYTIRLLPIGGFVRMAGEDPEMIEVKPGYTVGLLFDSENKVEKIIINQKEKYPDALVIEVEQADLEHQMRITGYEHGNEDHLSSFSVSETSFFIVDGEEVQIAPYNRQFHSKTVWQRIKAIAAGPIMNFILAYVILVMLGLMQGVPSDEPVLGKLIDNGRAAEAGLQEGDRIQTINGENMRSWTDIVNTVREHPEKELKIVLMRDNVKLTKYVTPEAVKAGDETVGRFGAYNPVKTGVLTSISYGATETATVAQSIVTNLGKLVTGQFSIDMLAGPVGIYDMTDQVAKTGVINLLKLAAFLSINLGIVNLLPIPALDGGRLLFLFIEAIRGKPINREKEAFVVFIGVAFLMLLMLVVTWNDIQRLFL</sequence>
<comment type="function">
    <text evidence="1">Is responsible for Site-2 cleavage of the RsiW anti-sigma factor. This results, after a third proteolytic step catalyzed by the ClpXP protease, in the release of SigW and the transcription activation of the genes under the control of the sigma-W factor (By similarity).</text>
</comment>
<comment type="cofactor">
    <cofactor evidence="1">
        <name>Zn(2+)</name>
        <dbReference type="ChEBI" id="CHEBI:29105"/>
    </cofactor>
</comment>
<comment type="subcellular location">
    <subcellularLocation>
        <location evidence="4">Cell membrane</location>
        <topology evidence="4">Multi-pass membrane protein</topology>
    </subcellularLocation>
</comment>
<comment type="similarity">
    <text evidence="4">Belongs to the peptidase M50B family.</text>
</comment>